<organism>
    <name type="scientific">Streptococcus pyogenes serotype M2 (strain MGAS10270)</name>
    <dbReference type="NCBI Taxonomy" id="370552"/>
    <lineage>
        <taxon>Bacteria</taxon>
        <taxon>Bacillati</taxon>
        <taxon>Bacillota</taxon>
        <taxon>Bacilli</taxon>
        <taxon>Lactobacillales</taxon>
        <taxon>Streptococcaceae</taxon>
        <taxon>Streptococcus</taxon>
    </lineage>
</organism>
<feature type="chain" id="PRO_0000264960" description="UvrABC system protein C">
    <location>
        <begin position="1"/>
        <end position="598"/>
    </location>
</feature>
<feature type="domain" description="GIY-YIG" evidence="1">
    <location>
        <begin position="14"/>
        <end position="91"/>
    </location>
</feature>
<feature type="domain" description="UVR" evidence="1">
    <location>
        <begin position="196"/>
        <end position="231"/>
    </location>
</feature>
<keyword id="KW-0963">Cytoplasm</keyword>
<keyword id="KW-0227">DNA damage</keyword>
<keyword id="KW-0228">DNA excision</keyword>
<keyword id="KW-0234">DNA repair</keyword>
<keyword id="KW-0267">Excision nuclease</keyword>
<keyword id="KW-0742">SOS response</keyword>
<accession>Q1JH25</accession>
<evidence type="ECO:0000255" key="1">
    <source>
        <dbReference type="HAMAP-Rule" id="MF_00203"/>
    </source>
</evidence>
<sequence>MNELIKHKLELLPDSPGCYLHKDKEGTIIYVGKAKNLKKRVRSYFRGSHDTKTELLVSEIVDFEYIVTESDTEALLLEINLIQKNMPKYNIKLKDDKSYPFLKITNESFPRLVITRYIKKNDGLYFGPYPDSYTANEVKKLLDRIFPFKKCKNPINKVCFYYHLGQCCAHTICHTDKAYWDRLIDDVKHFLNGKDDKIIEDLRSKMLAASEEMAFERAAEYRDLISGIATMRTKQRVMSKDLQDRDIFGYYVDKGWMCVQVFFVRQGKLIQRDVNLFPYYNDAEEDFLTYMGQFYQDKQHFIPKEVFIPEAIDEELVAAIVPTKIIKPKRGEKKQLVALATKNARVSLQQKFDLLEKDIKKTSGAIENLGQLLRIDKPVRIEAFDNSNIQGTSPVAAMVVFVDGKPSKKDYRKFKIKTVVGPDDYASMREVLFRRYSRVKKEGLQAPNLIIVDGGVGQVNVAKDVIEKQLGLTIPVAGLQKNDKHQTHDLLFGNPLEVVPLPRRSEEFFLLHRIQDEVHRFAVTFHRQVRRKNSFSSTLDHISGLGPKRKQLLLRHFKTITAIASATSEEIQALGIPKTVVEAIQQQITDNKNDRSSP</sequence>
<gene>
    <name evidence="1" type="primary">uvrC</name>
    <name type="ordered locus">MGAS10270_Spy0904</name>
</gene>
<comment type="function">
    <text evidence="1">The UvrABC repair system catalyzes the recognition and processing of DNA lesions. UvrC both incises the 5' and 3' sides of the lesion. The N-terminal half is responsible for the 3' incision and the C-terminal half is responsible for the 5' incision.</text>
</comment>
<comment type="subunit">
    <text evidence="1">Interacts with UvrB in an incision complex.</text>
</comment>
<comment type="subcellular location">
    <subcellularLocation>
        <location evidence="1">Cytoplasm</location>
    </subcellularLocation>
</comment>
<comment type="similarity">
    <text evidence="1">Belongs to the UvrC family.</text>
</comment>
<protein>
    <recommendedName>
        <fullName evidence="1">UvrABC system protein C</fullName>
        <shortName evidence="1">Protein UvrC</shortName>
    </recommendedName>
    <alternativeName>
        <fullName evidence="1">Excinuclease ABC subunit C</fullName>
    </alternativeName>
</protein>
<dbReference type="EMBL" id="CP000260">
    <property type="protein sequence ID" value="ABF33969.1"/>
    <property type="molecule type" value="Genomic_DNA"/>
</dbReference>
<dbReference type="RefSeq" id="WP_002984829.1">
    <property type="nucleotide sequence ID" value="NZ_CVUH01000005.1"/>
</dbReference>
<dbReference type="SMR" id="Q1JH25"/>
<dbReference type="GeneID" id="69900920"/>
<dbReference type="KEGG" id="sph:MGAS10270_Spy0904"/>
<dbReference type="HOGENOM" id="CLU_014841_3_2_9"/>
<dbReference type="Proteomes" id="UP000002436">
    <property type="component" value="Chromosome"/>
</dbReference>
<dbReference type="GO" id="GO:0005737">
    <property type="term" value="C:cytoplasm"/>
    <property type="evidence" value="ECO:0007669"/>
    <property type="project" value="UniProtKB-SubCell"/>
</dbReference>
<dbReference type="GO" id="GO:0009380">
    <property type="term" value="C:excinuclease repair complex"/>
    <property type="evidence" value="ECO:0007669"/>
    <property type="project" value="InterPro"/>
</dbReference>
<dbReference type="GO" id="GO:0003677">
    <property type="term" value="F:DNA binding"/>
    <property type="evidence" value="ECO:0007669"/>
    <property type="project" value="UniProtKB-UniRule"/>
</dbReference>
<dbReference type="GO" id="GO:0009381">
    <property type="term" value="F:excinuclease ABC activity"/>
    <property type="evidence" value="ECO:0007669"/>
    <property type="project" value="UniProtKB-UniRule"/>
</dbReference>
<dbReference type="GO" id="GO:0006289">
    <property type="term" value="P:nucleotide-excision repair"/>
    <property type="evidence" value="ECO:0007669"/>
    <property type="project" value="UniProtKB-UniRule"/>
</dbReference>
<dbReference type="GO" id="GO:0009432">
    <property type="term" value="P:SOS response"/>
    <property type="evidence" value="ECO:0007669"/>
    <property type="project" value="UniProtKB-UniRule"/>
</dbReference>
<dbReference type="CDD" id="cd10434">
    <property type="entry name" value="GIY-YIG_UvrC_Cho"/>
    <property type="match status" value="1"/>
</dbReference>
<dbReference type="FunFam" id="3.30.420.340:FF:000002">
    <property type="entry name" value="UvrABC system protein C"/>
    <property type="match status" value="1"/>
</dbReference>
<dbReference type="FunFam" id="3.40.1440.10:FF:000001">
    <property type="entry name" value="UvrABC system protein C"/>
    <property type="match status" value="1"/>
</dbReference>
<dbReference type="Gene3D" id="1.10.150.20">
    <property type="entry name" value="5' to 3' exonuclease, C-terminal subdomain"/>
    <property type="match status" value="1"/>
</dbReference>
<dbReference type="Gene3D" id="3.40.1440.10">
    <property type="entry name" value="GIY-YIG endonuclease"/>
    <property type="match status" value="1"/>
</dbReference>
<dbReference type="Gene3D" id="4.10.860.10">
    <property type="entry name" value="UVR domain"/>
    <property type="match status" value="1"/>
</dbReference>
<dbReference type="Gene3D" id="3.30.420.340">
    <property type="entry name" value="UvrC, RNAse H endonuclease domain"/>
    <property type="match status" value="1"/>
</dbReference>
<dbReference type="HAMAP" id="MF_00203">
    <property type="entry name" value="UvrC"/>
    <property type="match status" value="1"/>
</dbReference>
<dbReference type="InterPro" id="IPR000305">
    <property type="entry name" value="GIY-YIG_endonuc"/>
</dbReference>
<dbReference type="InterPro" id="IPR035901">
    <property type="entry name" value="GIY-YIG_endonuc_sf"/>
</dbReference>
<dbReference type="InterPro" id="IPR047296">
    <property type="entry name" value="GIY-YIG_UvrC_Cho"/>
</dbReference>
<dbReference type="InterPro" id="IPR010994">
    <property type="entry name" value="RuvA_2-like"/>
</dbReference>
<dbReference type="InterPro" id="IPR001943">
    <property type="entry name" value="UVR_dom"/>
</dbReference>
<dbReference type="InterPro" id="IPR036876">
    <property type="entry name" value="UVR_dom_sf"/>
</dbReference>
<dbReference type="InterPro" id="IPR050066">
    <property type="entry name" value="UvrABC_protein_C"/>
</dbReference>
<dbReference type="InterPro" id="IPR004791">
    <property type="entry name" value="UvrC"/>
</dbReference>
<dbReference type="InterPro" id="IPR001162">
    <property type="entry name" value="UvrC_RNase_H_dom"/>
</dbReference>
<dbReference type="InterPro" id="IPR038476">
    <property type="entry name" value="UvrC_RNase_H_dom_sf"/>
</dbReference>
<dbReference type="NCBIfam" id="TIGR00194">
    <property type="entry name" value="uvrC"/>
    <property type="match status" value="1"/>
</dbReference>
<dbReference type="PANTHER" id="PTHR30562:SF1">
    <property type="entry name" value="UVRABC SYSTEM PROTEIN C"/>
    <property type="match status" value="1"/>
</dbReference>
<dbReference type="PANTHER" id="PTHR30562">
    <property type="entry name" value="UVRC/OXIDOREDUCTASE"/>
    <property type="match status" value="1"/>
</dbReference>
<dbReference type="Pfam" id="PF01541">
    <property type="entry name" value="GIY-YIG"/>
    <property type="match status" value="1"/>
</dbReference>
<dbReference type="Pfam" id="PF14520">
    <property type="entry name" value="HHH_5"/>
    <property type="match status" value="1"/>
</dbReference>
<dbReference type="Pfam" id="PF02151">
    <property type="entry name" value="UVR"/>
    <property type="match status" value="1"/>
</dbReference>
<dbReference type="Pfam" id="PF22920">
    <property type="entry name" value="UvrC_RNaseH"/>
    <property type="match status" value="1"/>
</dbReference>
<dbReference type="Pfam" id="PF08459">
    <property type="entry name" value="UvrC_RNaseH_dom"/>
    <property type="match status" value="1"/>
</dbReference>
<dbReference type="SMART" id="SM00465">
    <property type="entry name" value="GIYc"/>
    <property type="match status" value="1"/>
</dbReference>
<dbReference type="SUPFAM" id="SSF46600">
    <property type="entry name" value="C-terminal UvrC-binding domain of UvrB"/>
    <property type="match status" value="1"/>
</dbReference>
<dbReference type="SUPFAM" id="SSF82771">
    <property type="entry name" value="GIY-YIG endonuclease"/>
    <property type="match status" value="1"/>
</dbReference>
<dbReference type="SUPFAM" id="SSF47781">
    <property type="entry name" value="RuvA domain 2-like"/>
    <property type="match status" value="1"/>
</dbReference>
<dbReference type="PROSITE" id="PS50164">
    <property type="entry name" value="GIY_YIG"/>
    <property type="match status" value="1"/>
</dbReference>
<dbReference type="PROSITE" id="PS50151">
    <property type="entry name" value="UVR"/>
    <property type="match status" value="1"/>
</dbReference>
<dbReference type="PROSITE" id="PS50165">
    <property type="entry name" value="UVRC"/>
    <property type="match status" value="1"/>
</dbReference>
<proteinExistence type="inferred from homology"/>
<name>UVRC_STRPD</name>
<reference key="1">
    <citation type="journal article" date="2006" name="Proc. Natl. Acad. Sci. U.S.A.">
        <title>Molecular genetic anatomy of inter- and intraserotype variation in the human bacterial pathogen group A Streptococcus.</title>
        <authorList>
            <person name="Beres S.B."/>
            <person name="Richter E.W."/>
            <person name="Nagiec M.J."/>
            <person name="Sumby P."/>
            <person name="Porcella S.F."/>
            <person name="DeLeo F.R."/>
            <person name="Musser J.M."/>
        </authorList>
    </citation>
    <scope>NUCLEOTIDE SEQUENCE [LARGE SCALE GENOMIC DNA]</scope>
    <source>
        <strain>MGAS10270</strain>
    </source>
</reference>